<dbReference type="EMBL" id="CP000967">
    <property type="protein sequence ID" value="ACD57899.1"/>
    <property type="molecule type" value="Genomic_DNA"/>
</dbReference>
<dbReference type="RefSeq" id="WP_011260024.1">
    <property type="nucleotide sequence ID" value="NC_010717.2"/>
</dbReference>
<dbReference type="SMR" id="B2SQS2"/>
<dbReference type="KEGG" id="xop:PXO_04509"/>
<dbReference type="eggNOG" id="COG0094">
    <property type="taxonomic scope" value="Bacteria"/>
</dbReference>
<dbReference type="HOGENOM" id="CLU_061015_2_1_6"/>
<dbReference type="Proteomes" id="UP000001740">
    <property type="component" value="Chromosome"/>
</dbReference>
<dbReference type="GO" id="GO:1990904">
    <property type="term" value="C:ribonucleoprotein complex"/>
    <property type="evidence" value="ECO:0007669"/>
    <property type="project" value="UniProtKB-KW"/>
</dbReference>
<dbReference type="GO" id="GO:0005840">
    <property type="term" value="C:ribosome"/>
    <property type="evidence" value="ECO:0007669"/>
    <property type="project" value="UniProtKB-KW"/>
</dbReference>
<dbReference type="GO" id="GO:0019843">
    <property type="term" value="F:rRNA binding"/>
    <property type="evidence" value="ECO:0007669"/>
    <property type="project" value="UniProtKB-UniRule"/>
</dbReference>
<dbReference type="GO" id="GO:0003735">
    <property type="term" value="F:structural constituent of ribosome"/>
    <property type="evidence" value="ECO:0007669"/>
    <property type="project" value="InterPro"/>
</dbReference>
<dbReference type="GO" id="GO:0000049">
    <property type="term" value="F:tRNA binding"/>
    <property type="evidence" value="ECO:0007669"/>
    <property type="project" value="UniProtKB-UniRule"/>
</dbReference>
<dbReference type="GO" id="GO:0006412">
    <property type="term" value="P:translation"/>
    <property type="evidence" value="ECO:0007669"/>
    <property type="project" value="UniProtKB-UniRule"/>
</dbReference>
<dbReference type="FunFam" id="3.30.1440.10:FF:000001">
    <property type="entry name" value="50S ribosomal protein L5"/>
    <property type="match status" value="1"/>
</dbReference>
<dbReference type="Gene3D" id="3.30.1440.10">
    <property type="match status" value="1"/>
</dbReference>
<dbReference type="HAMAP" id="MF_01333_B">
    <property type="entry name" value="Ribosomal_uL5_B"/>
    <property type="match status" value="1"/>
</dbReference>
<dbReference type="InterPro" id="IPR002132">
    <property type="entry name" value="Ribosomal_uL5"/>
</dbReference>
<dbReference type="InterPro" id="IPR020930">
    <property type="entry name" value="Ribosomal_uL5_bac-type"/>
</dbReference>
<dbReference type="InterPro" id="IPR031309">
    <property type="entry name" value="Ribosomal_uL5_C"/>
</dbReference>
<dbReference type="InterPro" id="IPR020929">
    <property type="entry name" value="Ribosomal_uL5_CS"/>
</dbReference>
<dbReference type="InterPro" id="IPR022803">
    <property type="entry name" value="Ribosomal_uL5_dom_sf"/>
</dbReference>
<dbReference type="InterPro" id="IPR031310">
    <property type="entry name" value="Ribosomal_uL5_N"/>
</dbReference>
<dbReference type="NCBIfam" id="NF000585">
    <property type="entry name" value="PRK00010.1"/>
    <property type="match status" value="1"/>
</dbReference>
<dbReference type="PANTHER" id="PTHR11994">
    <property type="entry name" value="60S RIBOSOMAL PROTEIN L11-RELATED"/>
    <property type="match status" value="1"/>
</dbReference>
<dbReference type="Pfam" id="PF00281">
    <property type="entry name" value="Ribosomal_L5"/>
    <property type="match status" value="1"/>
</dbReference>
<dbReference type="Pfam" id="PF00673">
    <property type="entry name" value="Ribosomal_L5_C"/>
    <property type="match status" value="1"/>
</dbReference>
<dbReference type="PIRSF" id="PIRSF002161">
    <property type="entry name" value="Ribosomal_L5"/>
    <property type="match status" value="1"/>
</dbReference>
<dbReference type="SUPFAM" id="SSF55282">
    <property type="entry name" value="RL5-like"/>
    <property type="match status" value="1"/>
</dbReference>
<dbReference type="PROSITE" id="PS00358">
    <property type="entry name" value="RIBOSOMAL_L5"/>
    <property type="match status" value="1"/>
</dbReference>
<sequence>MNTRLEKFYKENVVPALMKEFGYTNPMEVPKLVKVTLNMGVGEAASNKKILENAVADMSKISGQKPVVTKSRVSVASFKIRDGWPIGCKTTLRRAKMYEFLDRLINISLPRVRDFRGVSGRSFDGRGNFNMGVKEQIIFPEIDFDAVDAIRGMDIAVTTTAKTDAEAKALLAAFKFPFRN</sequence>
<name>RL5_XANOP</name>
<protein>
    <recommendedName>
        <fullName evidence="1">Large ribosomal subunit protein uL5</fullName>
    </recommendedName>
    <alternativeName>
        <fullName evidence="2">50S ribosomal protein L5</fullName>
    </alternativeName>
</protein>
<proteinExistence type="inferred from homology"/>
<organism>
    <name type="scientific">Xanthomonas oryzae pv. oryzae (strain PXO99A)</name>
    <dbReference type="NCBI Taxonomy" id="360094"/>
    <lineage>
        <taxon>Bacteria</taxon>
        <taxon>Pseudomonadati</taxon>
        <taxon>Pseudomonadota</taxon>
        <taxon>Gammaproteobacteria</taxon>
        <taxon>Lysobacterales</taxon>
        <taxon>Lysobacteraceae</taxon>
        <taxon>Xanthomonas</taxon>
    </lineage>
</organism>
<accession>B2SQS2</accession>
<feature type="chain" id="PRO_1000142474" description="Large ribosomal subunit protein uL5">
    <location>
        <begin position="1"/>
        <end position="180"/>
    </location>
</feature>
<evidence type="ECO:0000255" key="1">
    <source>
        <dbReference type="HAMAP-Rule" id="MF_01333"/>
    </source>
</evidence>
<evidence type="ECO:0000305" key="2"/>
<reference key="1">
    <citation type="journal article" date="2008" name="BMC Genomics">
        <title>Genome sequence and rapid evolution of the rice pathogen Xanthomonas oryzae pv. oryzae PXO99A.</title>
        <authorList>
            <person name="Salzberg S.L."/>
            <person name="Sommer D.D."/>
            <person name="Schatz M.C."/>
            <person name="Phillippy A.M."/>
            <person name="Rabinowicz P.D."/>
            <person name="Tsuge S."/>
            <person name="Furutani A."/>
            <person name="Ochiai H."/>
            <person name="Delcher A.L."/>
            <person name="Kelley D."/>
            <person name="Madupu R."/>
            <person name="Puiu D."/>
            <person name="Radune D."/>
            <person name="Shumway M."/>
            <person name="Trapnell C."/>
            <person name="Aparna G."/>
            <person name="Jha G."/>
            <person name="Pandey A."/>
            <person name="Patil P.B."/>
            <person name="Ishihara H."/>
            <person name="Meyer D.F."/>
            <person name="Szurek B."/>
            <person name="Verdier V."/>
            <person name="Koebnik R."/>
            <person name="Dow J.M."/>
            <person name="Ryan R.P."/>
            <person name="Hirata H."/>
            <person name="Tsuyumu S."/>
            <person name="Won Lee S."/>
            <person name="Seo Y.-S."/>
            <person name="Sriariyanum M."/>
            <person name="Ronald P.C."/>
            <person name="Sonti R.V."/>
            <person name="Van Sluys M.-A."/>
            <person name="Leach J.E."/>
            <person name="White F.F."/>
            <person name="Bogdanove A.J."/>
        </authorList>
    </citation>
    <scope>NUCLEOTIDE SEQUENCE [LARGE SCALE GENOMIC DNA]</scope>
    <source>
        <strain>PXO99A</strain>
    </source>
</reference>
<keyword id="KW-0687">Ribonucleoprotein</keyword>
<keyword id="KW-0689">Ribosomal protein</keyword>
<keyword id="KW-0694">RNA-binding</keyword>
<keyword id="KW-0699">rRNA-binding</keyword>
<keyword id="KW-0820">tRNA-binding</keyword>
<gene>
    <name evidence="1" type="primary">rplE</name>
    <name type="ordered locus">PXO_04509</name>
</gene>
<comment type="function">
    <text evidence="1">This is one of the proteins that bind and probably mediate the attachment of the 5S RNA into the large ribosomal subunit, where it forms part of the central protuberance. In the 70S ribosome it contacts protein S13 of the 30S subunit (bridge B1b), connecting the 2 subunits; this bridge is implicated in subunit movement. Contacts the P site tRNA; the 5S rRNA and some of its associated proteins might help stabilize positioning of ribosome-bound tRNAs.</text>
</comment>
<comment type="subunit">
    <text evidence="1">Part of the 50S ribosomal subunit; part of the 5S rRNA/L5/L18/L25 subcomplex. Contacts the 5S rRNA and the P site tRNA. Forms a bridge to the 30S subunit in the 70S ribosome.</text>
</comment>
<comment type="similarity">
    <text evidence="1">Belongs to the universal ribosomal protein uL5 family.</text>
</comment>